<protein>
    <recommendedName>
        <fullName evidence="1">Glutamyl-tRNA reductase</fullName>
        <shortName evidence="1">GluTR</shortName>
        <ecNumber evidence="1">1.2.1.70</ecNumber>
    </recommendedName>
</protein>
<organism>
    <name type="scientific">Syntrophobacter fumaroxidans (strain DSM 10017 / MPOB)</name>
    <dbReference type="NCBI Taxonomy" id="335543"/>
    <lineage>
        <taxon>Bacteria</taxon>
        <taxon>Pseudomonadati</taxon>
        <taxon>Thermodesulfobacteriota</taxon>
        <taxon>Syntrophobacteria</taxon>
        <taxon>Syntrophobacterales</taxon>
        <taxon>Syntrophobacteraceae</taxon>
        <taxon>Syntrophobacter</taxon>
    </lineage>
</organism>
<keyword id="KW-0521">NADP</keyword>
<keyword id="KW-0560">Oxidoreductase</keyword>
<keyword id="KW-0627">Porphyrin biosynthesis</keyword>
<keyword id="KW-1185">Reference proteome</keyword>
<comment type="function">
    <text evidence="1">Catalyzes the NADPH-dependent reduction of glutamyl-tRNA(Glu) to glutamate 1-semialdehyde (GSA).</text>
</comment>
<comment type="catalytic activity">
    <reaction evidence="1">
        <text>(S)-4-amino-5-oxopentanoate + tRNA(Glu) + NADP(+) = L-glutamyl-tRNA(Glu) + NADPH + H(+)</text>
        <dbReference type="Rhea" id="RHEA:12344"/>
        <dbReference type="Rhea" id="RHEA-COMP:9663"/>
        <dbReference type="Rhea" id="RHEA-COMP:9680"/>
        <dbReference type="ChEBI" id="CHEBI:15378"/>
        <dbReference type="ChEBI" id="CHEBI:57501"/>
        <dbReference type="ChEBI" id="CHEBI:57783"/>
        <dbReference type="ChEBI" id="CHEBI:58349"/>
        <dbReference type="ChEBI" id="CHEBI:78442"/>
        <dbReference type="ChEBI" id="CHEBI:78520"/>
        <dbReference type="EC" id="1.2.1.70"/>
    </reaction>
</comment>
<comment type="pathway">
    <text evidence="1">Porphyrin-containing compound metabolism; protoporphyrin-IX biosynthesis; 5-aminolevulinate from L-glutamyl-tRNA(Glu): step 1/2.</text>
</comment>
<comment type="subunit">
    <text evidence="1">Homodimer.</text>
</comment>
<comment type="domain">
    <text evidence="1">Possesses an unusual extended V-shaped dimeric structure with each monomer consisting of three distinct domains arranged along a curved 'spinal' alpha-helix. The N-terminal catalytic domain specifically recognizes the glutamate moiety of the substrate. The second domain is the NADPH-binding domain, and the third C-terminal domain is responsible for dimerization.</text>
</comment>
<comment type="miscellaneous">
    <text evidence="1">During catalysis, the active site Cys acts as a nucleophile attacking the alpha-carbonyl group of tRNA-bound glutamate with the formation of a thioester intermediate between enzyme and glutamate, and the concomitant release of tRNA(Glu). The thioester intermediate is finally reduced by direct hydride transfer from NADPH, to form the product GSA.</text>
</comment>
<comment type="similarity">
    <text evidence="1">Belongs to the glutamyl-tRNA reductase family.</text>
</comment>
<dbReference type="EC" id="1.2.1.70" evidence="1"/>
<dbReference type="EMBL" id="CP000478">
    <property type="protein sequence ID" value="ABK17277.1"/>
    <property type="molecule type" value="Genomic_DNA"/>
</dbReference>
<dbReference type="RefSeq" id="WP_011698447.1">
    <property type="nucleotide sequence ID" value="NC_008554.1"/>
</dbReference>
<dbReference type="SMR" id="A0LIM5"/>
<dbReference type="FunCoup" id="A0LIM5">
    <property type="interactions" value="372"/>
</dbReference>
<dbReference type="STRING" id="335543.Sfum_1590"/>
<dbReference type="KEGG" id="sfu:Sfum_1590"/>
<dbReference type="eggNOG" id="COG0373">
    <property type="taxonomic scope" value="Bacteria"/>
</dbReference>
<dbReference type="HOGENOM" id="CLU_035113_2_2_7"/>
<dbReference type="InParanoid" id="A0LIM5"/>
<dbReference type="OrthoDB" id="110209at2"/>
<dbReference type="UniPathway" id="UPA00251">
    <property type="reaction ID" value="UER00316"/>
</dbReference>
<dbReference type="Proteomes" id="UP000001784">
    <property type="component" value="Chromosome"/>
</dbReference>
<dbReference type="GO" id="GO:0008883">
    <property type="term" value="F:glutamyl-tRNA reductase activity"/>
    <property type="evidence" value="ECO:0007669"/>
    <property type="project" value="UniProtKB-UniRule"/>
</dbReference>
<dbReference type="GO" id="GO:0050661">
    <property type="term" value="F:NADP binding"/>
    <property type="evidence" value="ECO:0007669"/>
    <property type="project" value="InterPro"/>
</dbReference>
<dbReference type="GO" id="GO:0019353">
    <property type="term" value="P:protoporphyrinogen IX biosynthetic process from glutamate"/>
    <property type="evidence" value="ECO:0007669"/>
    <property type="project" value="TreeGrafter"/>
</dbReference>
<dbReference type="CDD" id="cd05213">
    <property type="entry name" value="NAD_bind_Glutamyl_tRNA_reduct"/>
    <property type="match status" value="1"/>
</dbReference>
<dbReference type="FunFam" id="3.30.460.30:FF:000001">
    <property type="entry name" value="Glutamyl-tRNA reductase"/>
    <property type="match status" value="1"/>
</dbReference>
<dbReference type="FunFam" id="3.40.50.720:FF:000031">
    <property type="entry name" value="Glutamyl-tRNA reductase"/>
    <property type="match status" value="1"/>
</dbReference>
<dbReference type="Gene3D" id="3.30.460.30">
    <property type="entry name" value="Glutamyl-tRNA reductase, N-terminal domain"/>
    <property type="match status" value="1"/>
</dbReference>
<dbReference type="Gene3D" id="3.40.50.720">
    <property type="entry name" value="NAD(P)-binding Rossmann-like Domain"/>
    <property type="match status" value="1"/>
</dbReference>
<dbReference type="HAMAP" id="MF_00087">
    <property type="entry name" value="Glu_tRNA_reductase"/>
    <property type="match status" value="1"/>
</dbReference>
<dbReference type="InterPro" id="IPR000343">
    <property type="entry name" value="4pyrrol_synth_GluRdtase"/>
</dbReference>
<dbReference type="InterPro" id="IPR015896">
    <property type="entry name" value="4pyrrol_synth_GluRdtase_dimer"/>
</dbReference>
<dbReference type="InterPro" id="IPR015895">
    <property type="entry name" value="4pyrrol_synth_GluRdtase_N"/>
</dbReference>
<dbReference type="InterPro" id="IPR018214">
    <property type="entry name" value="GluRdtase_CS"/>
</dbReference>
<dbReference type="InterPro" id="IPR036453">
    <property type="entry name" value="GluRdtase_dimer_dom_sf"/>
</dbReference>
<dbReference type="InterPro" id="IPR036343">
    <property type="entry name" value="GluRdtase_N_sf"/>
</dbReference>
<dbReference type="InterPro" id="IPR036291">
    <property type="entry name" value="NAD(P)-bd_dom_sf"/>
</dbReference>
<dbReference type="InterPro" id="IPR006151">
    <property type="entry name" value="Shikm_DH/Glu-tRNA_Rdtase"/>
</dbReference>
<dbReference type="NCBIfam" id="TIGR01035">
    <property type="entry name" value="hemA"/>
    <property type="match status" value="1"/>
</dbReference>
<dbReference type="NCBIfam" id="NF000744">
    <property type="entry name" value="PRK00045.1-3"/>
    <property type="match status" value="1"/>
</dbReference>
<dbReference type="PANTHER" id="PTHR43013">
    <property type="entry name" value="GLUTAMYL-TRNA REDUCTASE"/>
    <property type="match status" value="1"/>
</dbReference>
<dbReference type="PANTHER" id="PTHR43013:SF1">
    <property type="entry name" value="GLUTAMYL-TRNA REDUCTASE"/>
    <property type="match status" value="1"/>
</dbReference>
<dbReference type="Pfam" id="PF00745">
    <property type="entry name" value="GlutR_dimer"/>
    <property type="match status" value="1"/>
</dbReference>
<dbReference type="Pfam" id="PF05201">
    <property type="entry name" value="GlutR_N"/>
    <property type="match status" value="1"/>
</dbReference>
<dbReference type="Pfam" id="PF01488">
    <property type="entry name" value="Shikimate_DH"/>
    <property type="match status" value="1"/>
</dbReference>
<dbReference type="PIRSF" id="PIRSF000445">
    <property type="entry name" value="4pyrrol_synth_GluRdtase"/>
    <property type="match status" value="1"/>
</dbReference>
<dbReference type="SUPFAM" id="SSF69742">
    <property type="entry name" value="Glutamyl tRNA-reductase catalytic, N-terminal domain"/>
    <property type="match status" value="1"/>
</dbReference>
<dbReference type="SUPFAM" id="SSF69075">
    <property type="entry name" value="Glutamyl tRNA-reductase dimerization domain"/>
    <property type="match status" value="1"/>
</dbReference>
<dbReference type="SUPFAM" id="SSF51735">
    <property type="entry name" value="NAD(P)-binding Rossmann-fold domains"/>
    <property type="match status" value="1"/>
</dbReference>
<dbReference type="PROSITE" id="PS00747">
    <property type="entry name" value="GLUTR"/>
    <property type="match status" value="1"/>
</dbReference>
<feature type="chain" id="PRO_0000335075" description="Glutamyl-tRNA reductase">
    <location>
        <begin position="1"/>
        <end position="461"/>
    </location>
</feature>
<feature type="active site" description="Nucleophile" evidence="1">
    <location>
        <position position="51"/>
    </location>
</feature>
<feature type="binding site" evidence="1">
    <location>
        <begin position="50"/>
        <end position="53"/>
    </location>
    <ligand>
        <name>substrate</name>
    </ligand>
</feature>
<feature type="binding site" evidence="1">
    <location>
        <position position="111"/>
    </location>
    <ligand>
        <name>substrate</name>
    </ligand>
</feature>
<feature type="binding site" evidence="1">
    <location>
        <begin position="116"/>
        <end position="118"/>
    </location>
    <ligand>
        <name>substrate</name>
    </ligand>
</feature>
<feature type="binding site" evidence="1">
    <location>
        <position position="122"/>
    </location>
    <ligand>
        <name>substrate</name>
    </ligand>
</feature>
<feature type="binding site" evidence="1">
    <location>
        <begin position="191"/>
        <end position="196"/>
    </location>
    <ligand>
        <name>NADP(+)</name>
        <dbReference type="ChEBI" id="CHEBI:58349"/>
    </ligand>
</feature>
<feature type="site" description="Important for activity" evidence="1">
    <location>
        <position position="101"/>
    </location>
</feature>
<accession>A0LIM5</accession>
<gene>
    <name evidence="1" type="primary">hemA</name>
    <name type="ordered locus">Sfum_1590</name>
</gene>
<name>HEM1_SYNFM</name>
<sequence length="461" mass="52306">MCHIILLGMNHKTAPVEMRERLAVACRQEVNPLRLLPRLENVDELLFLSTCNRVEFLFTCRDRDGGLREVTALLRTYLGLDSTEGVENHVYAFRGMEAVRHVFRVASSLDSMVVGEPQILGQLKSAYREATEWRTVKVILNRLLHKTFSVAKRVRSETCIGSNAVSISYAAVELAKKIFGSLQDKRVLLIGAGEMAELAAEHLLAQGVRHMVVANRTLERAVDLAKRFRAETTPFDHILNALKNTDIVLSSTGAPEPILKYNDVRARMRERRNKPLFFIDIAVPRDIDPKINEIDNVYLYDIDDLQGVIDLNREERKREAERAEHIIAGETLKFQEWMATLNVVPTIVALREKAETIRRSELQRTLSHLPHMSEKDRLAVEALTEAIVKKLLHDPIVFLKKKADRSTKDMYVDYTQQLFNLADGDDGEEAPAVTVQMASAGNDGTLLKTFEPDKESPWRKS</sequence>
<proteinExistence type="inferred from homology"/>
<evidence type="ECO:0000255" key="1">
    <source>
        <dbReference type="HAMAP-Rule" id="MF_00087"/>
    </source>
</evidence>
<reference key="1">
    <citation type="submission" date="2006-10" db="EMBL/GenBank/DDBJ databases">
        <title>Complete sequence of Syntrophobacter fumaroxidans MPOB.</title>
        <authorList>
            <consortium name="US DOE Joint Genome Institute"/>
            <person name="Copeland A."/>
            <person name="Lucas S."/>
            <person name="Lapidus A."/>
            <person name="Barry K."/>
            <person name="Detter J.C."/>
            <person name="Glavina del Rio T."/>
            <person name="Hammon N."/>
            <person name="Israni S."/>
            <person name="Pitluck S."/>
            <person name="Goltsman E.G."/>
            <person name="Martinez M."/>
            <person name="Schmutz J."/>
            <person name="Larimer F."/>
            <person name="Land M."/>
            <person name="Hauser L."/>
            <person name="Kyrpides N."/>
            <person name="Kim E."/>
            <person name="Boone D.R."/>
            <person name="Brockman F."/>
            <person name="Culley D."/>
            <person name="Ferry J."/>
            <person name="Gunsalus R."/>
            <person name="McInerney M.J."/>
            <person name="Morrison M."/>
            <person name="Plugge C."/>
            <person name="Rohlin L."/>
            <person name="Scholten J."/>
            <person name="Sieber J."/>
            <person name="Stams A.J.M."/>
            <person name="Worm P."/>
            <person name="Henstra A.M."/>
            <person name="Richardson P."/>
        </authorList>
    </citation>
    <scope>NUCLEOTIDE SEQUENCE [LARGE SCALE GENOMIC DNA]</scope>
    <source>
        <strain>DSM 10017 / MPOB</strain>
    </source>
</reference>